<accession>A5FPV2</accession>
<keyword id="KW-0004">4Fe-4S</keyword>
<keyword id="KW-0963">Cytoplasm</keyword>
<keyword id="KW-0408">Iron</keyword>
<keyword id="KW-0411">Iron-sulfur</keyword>
<keyword id="KW-0479">Metal-binding</keyword>
<keyword id="KW-0949">S-adenosyl-L-methionine</keyword>
<keyword id="KW-0808">Transferase</keyword>
<keyword id="KW-0819">tRNA processing</keyword>
<organism>
    <name type="scientific">Dehalococcoides mccartyi (strain ATCC BAA-2100 / JCM 16839 / KCTC 5957 / BAV1)</name>
    <dbReference type="NCBI Taxonomy" id="216389"/>
    <lineage>
        <taxon>Bacteria</taxon>
        <taxon>Bacillati</taxon>
        <taxon>Chloroflexota</taxon>
        <taxon>Dehalococcoidia</taxon>
        <taxon>Dehalococcoidales</taxon>
        <taxon>Dehalococcoidaceae</taxon>
        <taxon>Dehalococcoides</taxon>
    </lineage>
</organism>
<proteinExistence type="inferred from homology"/>
<gene>
    <name evidence="1" type="primary">miaB</name>
    <name type="ordered locus">DehaBAV1_1195</name>
</gene>
<sequence>MPGYYLWTIGCQMNQAESDRLGRLFELWGYSLADKAEDAELVLVNSCVVREHAENKVVNRLHLLRSLKNENPKLKIALTGCLVGQDISLIKKKFPFVDYIFGPGSMPDWREIPEGFILPLRPPVSANVTIMQGCNNFCTYCVVPYRRGREKSRSIAEIGCEVAELVRRGSREVVLLGQNVDSYGHDLPEKPCLADLLSALHDITGLLRIRFLTSHPKDISQKLIDAMAHLPKVCRSLSLPVQSGDDTILASMRRGYTNQQYRELVERIKTAMPDISLQTDLIVGFPSENEEQFNQSYKLMADIGYDAIHVAAYSPRPQTVAAHDMADDVPVIEKKRRLKLIEDLQKETVGKANAALMDTFAEVLVEGLQKNKWQGRTLGGKLVFLESDLPLEGCLVKVKIFKTSPWSLQAKLVNIMES</sequence>
<comment type="function">
    <text evidence="1">Catalyzes the methylthiolation of N6-(dimethylallyl)adenosine (i(6)A), leading to the formation of 2-methylthio-N6-(dimethylallyl)adenosine (ms(2)i(6)A) at position 37 in tRNAs that read codons beginning with uridine.</text>
</comment>
<comment type="catalytic activity">
    <reaction evidence="1">
        <text>N(6)-dimethylallyladenosine(37) in tRNA + (sulfur carrier)-SH + AH2 + 2 S-adenosyl-L-methionine = 2-methylsulfanyl-N(6)-dimethylallyladenosine(37) in tRNA + (sulfur carrier)-H + 5'-deoxyadenosine + L-methionine + A + S-adenosyl-L-homocysteine + 2 H(+)</text>
        <dbReference type="Rhea" id="RHEA:37067"/>
        <dbReference type="Rhea" id="RHEA-COMP:10375"/>
        <dbReference type="Rhea" id="RHEA-COMP:10376"/>
        <dbReference type="Rhea" id="RHEA-COMP:14737"/>
        <dbReference type="Rhea" id="RHEA-COMP:14739"/>
        <dbReference type="ChEBI" id="CHEBI:13193"/>
        <dbReference type="ChEBI" id="CHEBI:15378"/>
        <dbReference type="ChEBI" id="CHEBI:17319"/>
        <dbReference type="ChEBI" id="CHEBI:17499"/>
        <dbReference type="ChEBI" id="CHEBI:29917"/>
        <dbReference type="ChEBI" id="CHEBI:57844"/>
        <dbReference type="ChEBI" id="CHEBI:57856"/>
        <dbReference type="ChEBI" id="CHEBI:59789"/>
        <dbReference type="ChEBI" id="CHEBI:64428"/>
        <dbReference type="ChEBI" id="CHEBI:74415"/>
        <dbReference type="ChEBI" id="CHEBI:74417"/>
        <dbReference type="EC" id="2.8.4.3"/>
    </reaction>
</comment>
<comment type="cofactor">
    <cofactor evidence="1">
        <name>[4Fe-4S] cluster</name>
        <dbReference type="ChEBI" id="CHEBI:49883"/>
    </cofactor>
    <text evidence="1">Binds 2 [4Fe-4S] clusters. One cluster is coordinated with 3 cysteines and an exchangeable S-adenosyl-L-methionine.</text>
</comment>
<comment type="subunit">
    <text evidence="1">Monomer.</text>
</comment>
<comment type="subcellular location">
    <subcellularLocation>
        <location evidence="1">Cytoplasm</location>
    </subcellularLocation>
</comment>
<comment type="similarity">
    <text evidence="1">Belongs to the methylthiotransferase family. MiaB subfamily.</text>
</comment>
<dbReference type="EC" id="2.8.4.3" evidence="1"/>
<dbReference type="EMBL" id="CP000688">
    <property type="protein sequence ID" value="ABQ17774.1"/>
    <property type="molecule type" value="Genomic_DNA"/>
</dbReference>
<dbReference type="SMR" id="A5FPV2"/>
<dbReference type="KEGG" id="deb:DehaBAV1_1195"/>
<dbReference type="PATRIC" id="fig|216389.18.peg.1259"/>
<dbReference type="HOGENOM" id="CLU_018697_2_0_0"/>
<dbReference type="GO" id="GO:0005829">
    <property type="term" value="C:cytosol"/>
    <property type="evidence" value="ECO:0007669"/>
    <property type="project" value="TreeGrafter"/>
</dbReference>
<dbReference type="GO" id="GO:0051539">
    <property type="term" value="F:4 iron, 4 sulfur cluster binding"/>
    <property type="evidence" value="ECO:0007669"/>
    <property type="project" value="UniProtKB-UniRule"/>
</dbReference>
<dbReference type="GO" id="GO:0046872">
    <property type="term" value="F:metal ion binding"/>
    <property type="evidence" value="ECO:0007669"/>
    <property type="project" value="UniProtKB-KW"/>
</dbReference>
<dbReference type="GO" id="GO:0035597">
    <property type="term" value="F:N6-isopentenyladenosine methylthiotransferase activity"/>
    <property type="evidence" value="ECO:0007669"/>
    <property type="project" value="TreeGrafter"/>
</dbReference>
<dbReference type="CDD" id="cd01335">
    <property type="entry name" value="Radical_SAM"/>
    <property type="match status" value="1"/>
</dbReference>
<dbReference type="FunFam" id="3.40.50.12160:FF:000003">
    <property type="entry name" value="CDK5 regulatory subunit-associated protein 1"/>
    <property type="match status" value="1"/>
</dbReference>
<dbReference type="FunFam" id="3.80.30.20:FF:000001">
    <property type="entry name" value="tRNA-2-methylthio-N(6)-dimethylallyladenosine synthase 2"/>
    <property type="match status" value="1"/>
</dbReference>
<dbReference type="Gene3D" id="3.40.50.12160">
    <property type="entry name" value="Methylthiotransferase, N-terminal domain"/>
    <property type="match status" value="1"/>
</dbReference>
<dbReference type="Gene3D" id="3.80.30.20">
    <property type="entry name" value="tm_1862 like domain"/>
    <property type="match status" value="1"/>
</dbReference>
<dbReference type="HAMAP" id="MF_01864">
    <property type="entry name" value="tRNA_metthiotr_MiaB"/>
    <property type="match status" value="1"/>
</dbReference>
<dbReference type="InterPro" id="IPR006638">
    <property type="entry name" value="Elp3/MiaA/NifB-like_rSAM"/>
</dbReference>
<dbReference type="InterPro" id="IPR005839">
    <property type="entry name" value="Methylthiotransferase"/>
</dbReference>
<dbReference type="InterPro" id="IPR020612">
    <property type="entry name" value="Methylthiotransferase_CS"/>
</dbReference>
<dbReference type="InterPro" id="IPR013848">
    <property type="entry name" value="Methylthiotransferase_N"/>
</dbReference>
<dbReference type="InterPro" id="IPR038135">
    <property type="entry name" value="Methylthiotransferase_N_sf"/>
</dbReference>
<dbReference type="InterPro" id="IPR006463">
    <property type="entry name" value="MiaB_methiolase"/>
</dbReference>
<dbReference type="InterPro" id="IPR007197">
    <property type="entry name" value="rSAM"/>
</dbReference>
<dbReference type="InterPro" id="IPR023404">
    <property type="entry name" value="rSAM_horseshoe"/>
</dbReference>
<dbReference type="InterPro" id="IPR002792">
    <property type="entry name" value="TRAM_dom"/>
</dbReference>
<dbReference type="NCBIfam" id="TIGR00089">
    <property type="entry name" value="MiaB/RimO family radical SAM methylthiotransferase"/>
    <property type="match status" value="1"/>
</dbReference>
<dbReference type="NCBIfam" id="NF010916">
    <property type="entry name" value="PRK14336.1"/>
    <property type="match status" value="1"/>
</dbReference>
<dbReference type="PANTHER" id="PTHR43020">
    <property type="entry name" value="CDK5 REGULATORY SUBUNIT-ASSOCIATED PROTEIN 1"/>
    <property type="match status" value="1"/>
</dbReference>
<dbReference type="PANTHER" id="PTHR43020:SF2">
    <property type="entry name" value="MITOCHONDRIAL TRNA METHYLTHIOTRANSFERASE CDK5RAP1"/>
    <property type="match status" value="1"/>
</dbReference>
<dbReference type="Pfam" id="PF04055">
    <property type="entry name" value="Radical_SAM"/>
    <property type="match status" value="1"/>
</dbReference>
<dbReference type="Pfam" id="PF01938">
    <property type="entry name" value="TRAM"/>
    <property type="match status" value="1"/>
</dbReference>
<dbReference type="Pfam" id="PF00919">
    <property type="entry name" value="UPF0004"/>
    <property type="match status" value="1"/>
</dbReference>
<dbReference type="SFLD" id="SFLDG01082">
    <property type="entry name" value="B12-binding_domain_containing"/>
    <property type="match status" value="1"/>
</dbReference>
<dbReference type="SFLD" id="SFLDG01061">
    <property type="entry name" value="methylthiotransferase"/>
    <property type="match status" value="1"/>
</dbReference>
<dbReference type="SFLD" id="SFLDS00029">
    <property type="entry name" value="Radical_SAM"/>
    <property type="match status" value="1"/>
</dbReference>
<dbReference type="SMART" id="SM00729">
    <property type="entry name" value="Elp3"/>
    <property type="match status" value="1"/>
</dbReference>
<dbReference type="SUPFAM" id="SSF102114">
    <property type="entry name" value="Radical SAM enzymes"/>
    <property type="match status" value="1"/>
</dbReference>
<dbReference type="PROSITE" id="PS51449">
    <property type="entry name" value="MTTASE_N"/>
    <property type="match status" value="1"/>
</dbReference>
<dbReference type="PROSITE" id="PS01278">
    <property type="entry name" value="MTTASE_RADICAL"/>
    <property type="match status" value="1"/>
</dbReference>
<dbReference type="PROSITE" id="PS51918">
    <property type="entry name" value="RADICAL_SAM"/>
    <property type="match status" value="1"/>
</dbReference>
<dbReference type="PROSITE" id="PS50926">
    <property type="entry name" value="TRAM"/>
    <property type="match status" value="1"/>
</dbReference>
<evidence type="ECO:0000255" key="1">
    <source>
        <dbReference type="HAMAP-Rule" id="MF_01864"/>
    </source>
</evidence>
<evidence type="ECO:0000255" key="2">
    <source>
        <dbReference type="PROSITE-ProRule" id="PRU01266"/>
    </source>
</evidence>
<protein>
    <recommendedName>
        <fullName evidence="1">tRNA-2-methylthio-N(6)-dimethylallyladenosine synthase</fullName>
        <ecNumber evidence="1">2.8.4.3</ecNumber>
    </recommendedName>
    <alternativeName>
        <fullName evidence="1">(Dimethylallyl)adenosine tRNA methylthiotransferase MiaB</fullName>
    </alternativeName>
    <alternativeName>
        <fullName evidence="1">tRNA-i(6)A37 methylthiotransferase</fullName>
    </alternativeName>
</protein>
<name>MIAB_DEHMB</name>
<feature type="chain" id="PRO_0000374256" description="tRNA-2-methylthio-N(6)-dimethylallyladenosine synthase">
    <location>
        <begin position="1"/>
        <end position="418"/>
    </location>
</feature>
<feature type="domain" description="MTTase N-terminal" evidence="1">
    <location>
        <begin position="2"/>
        <end position="118"/>
    </location>
</feature>
<feature type="domain" description="Radical SAM core" evidence="2">
    <location>
        <begin position="120"/>
        <end position="351"/>
    </location>
</feature>
<feature type="domain" description="TRAM" evidence="1">
    <location>
        <begin position="346"/>
        <end position="414"/>
    </location>
</feature>
<feature type="binding site" evidence="1">
    <location>
        <position position="11"/>
    </location>
    <ligand>
        <name>[4Fe-4S] cluster</name>
        <dbReference type="ChEBI" id="CHEBI:49883"/>
        <label>1</label>
    </ligand>
</feature>
<feature type="binding site" evidence="1">
    <location>
        <position position="47"/>
    </location>
    <ligand>
        <name>[4Fe-4S] cluster</name>
        <dbReference type="ChEBI" id="CHEBI:49883"/>
        <label>1</label>
    </ligand>
</feature>
<feature type="binding site" evidence="1">
    <location>
        <position position="81"/>
    </location>
    <ligand>
        <name>[4Fe-4S] cluster</name>
        <dbReference type="ChEBI" id="CHEBI:49883"/>
        <label>1</label>
    </ligand>
</feature>
<feature type="binding site" evidence="1">
    <location>
        <position position="134"/>
    </location>
    <ligand>
        <name>[4Fe-4S] cluster</name>
        <dbReference type="ChEBI" id="CHEBI:49883"/>
        <label>2</label>
        <note>4Fe-4S-S-AdoMet</note>
    </ligand>
</feature>
<feature type="binding site" evidence="1">
    <location>
        <position position="138"/>
    </location>
    <ligand>
        <name>[4Fe-4S] cluster</name>
        <dbReference type="ChEBI" id="CHEBI:49883"/>
        <label>2</label>
        <note>4Fe-4S-S-AdoMet</note>
    </ligand>
</feature>
<feature type="binding site" evidence="1">
    <location>
        <position position="141"/>
    </location>
    <ligand>
        <name>[4Fe-4S] cluster</name>
        <dbReference type="ChEBI" id="CHEBI:49883"/>
        <label>2</label>
        <note>4Fe-4S-S-AdoMet</note>
    </ligand>
</feature>
<reference key="1">
    <citation type="submission" date="2007-05" db="EMBL/GenBank/DDBJ databases">
        <title>Complete sequence of Dehalococcoides sp. BAV1.</title>
        <authorList>
            <consortium name="US DOE Joint Genome Institute"/>
            <person name="Copeland A."/>
            <person name="Lucas S."/>
            <person name="Lapidus A."/>
            <person name="Barry K."/>
            <person name="Detter J.C."/>
            <person name="Glavina del Rio T."/>
            <person name="Hammon N."/>
            <person name="Israni S."/>
            <person name="Pitluck S."/>
            <person name="Lowry S."/>
            <person name="Clum A."/>
            <person name="Schmutz J."/>
            <person name="Larimer F."/>
            <person name="Land M."/>
            <person name="Hauser L."/>
            <person name="Kyrpides N."/>
            <person name="Kim E."/>
            <person name="Ritalahti K.M."/>
            <person name="Loeffler F."/>
            <person name="Richardson P."/>
        </authorList>
    </citation>
    <scope>NUCLEOTIDE SEQUENCE [LARGE SCALE GENOMIC DNA]</scope>
    <source>
        <strain>ATCC BAA-2100 / JCM 16839 / KCTC 5957 / BAV1</strain>
    </source>
</reference>